<dbReference type="EC" id="1.5.1.2" evidence="2"/>
<dbReference type="EMBL" id="AB169063">
    <property type="protein sequence ID" value="BAE01157.1"/>
    <property type="molecule type" value="mRNA"/>
</dbReference>
<dbReference type="RefSeq" id="XP_005541057.1">
    <property type="nucleotide sequence ID" value="XM_005541000.4"/>
</dbReference>
<dbReference type="SMR" id="Q4R6W7"/>
<dbReference type="STRING" id="9541.ENSMFAP00000017282"/>
<dbReference type="Ensembl" id="ENSMFAT00000067823.2">
    <property type="protein sequence ID" value="ENSMFAP00000017282.1"/>
    <property type="gene ID" value="ENSMFAG00000031760.2"/>
</dbReference>
<dbReference type="GeneID" id="101864777"/>
<dbReference type="KEGG" id="mcf:101864777"/>
<dbReference type="CTD" id="29920"/>
<dbReference type="VEuPathDB" id="HostDB:ENSMFAG00000031760"/>
<dbReference type="eggNOG" id="KOG3124">
    <property type="taxonomic scope" value="Eukaryota"/>
</dbReference>
<dbReference type="GeneTree" id="ENSGT00950000183044"/>
<dbReference type="OMA" id="YYFIESL"/>
<dbReference type="OrthoDB" id="13930at314294"/>
<dbReference type="UniPathway" id="UPA00098">
    <property type="reaction ID" value="UER00361"/>
</dbReference>
<dbReference type="Proteomes" id="UP000233100">
    <property type="component" value="Chromosome 1"/>
</dbReference>
<dbReference type="Bgee" id="ENSMFAG00000031760">
    <property type="expression patterns" value="Expressed in bone marrow and 13 other cell types or tissues"/>
</dbReference>
<dbReference type="GO" id="GO:0005739">
    <property type="term" value="C:mitochondrion"/>
    <property type="evidence" value="ECO:0000250"/>
    <property type="project" value="UniProtKB"/>
</dbReference>
<dbReference type="GO" id="GO:0004735">
    <property type="term" value="F:pyrroline-5-carboxylate reductase activity"/>
    <property type="evidence" value="ECO:0000250"/>
    <property type="project" value="UniProtKB"/>
</dbReference>
<dbReference type="GO" id="GO:0034599">
    <property type="term" value="P:cellular response to oxidative stress"/>
    <property type="evidence" value="ECO:0000250"/>
    <property type="project" value="UniProtKB"/>
</dbReference>
<dbReference type="GO" id="GO:0055129">
    <property type="term" value="P:L-proline biosynthetic process"/>
    <property type="evidence" value="ECO:0007669"/>
    <property type="project" value="UniProtKB-UniPathway"/>
</dbReference>
<dbReference type="GO" id="GO:0006561">
    <property type="term" value="P:proline biosynthetic process"/>
    <property type="evidence" value="ECO:0000250"/>
    <property type="project" value="UniProtKB"/>
</dbReference>
<dbReference type="FunFam" id="3.40.50.720:FF:000064">
    <property type="entry name" value="Pyrroline-5-carboxylate reductase 1"/>
    <property type="match status" value="1"/>
</dbReference>
<dbReference type="FunFam" id="1.10.3730.10:FF:000003">
    <property type="entry name" value="Pyrroline-5-carboxylate reductase 1, mitochondrial"/>
    <property type="match status" value="1"/>
</dbReference>
<dbReference type="Gene3D" id="3.40.50.720">
    <property type="entry name" value="NAD(P)-binding Rossmann-like Domain"/>
    <property type="match status" value="1"/>
</dbReference>
<dbReference type="Gene3D" id="1.10.3730.10">
    <property type="entry name" value="ProC C-terminal domain-like"/>
    <property type="match status" value="1"/>
</dbReference>
<dbReference type="HAMAP" id="MF_01925">
    <property type="entry name" value="P5C_reductase"/>
    <property type="match status" value="1"/>
</dbReference>
<dbReference type="InterPro" id="IPR008927">
    <property type="entry name" value="6-PGluconate_DH-like_C_sf"/>
</dbReference>
<dbReference type="InterPro" id="IPR036291">
    <property type="entry name" value="NAD(P)-bd_dom_sf"/>
</dbReference>
<dbReference type="InterPro" id="IPR028939">
    <property type="entry name" value="P5C_Rdtase_cat_N"/>
</dbReference>
<dbReference type="InterPro" id="IPR053790">
    <property type="entry name" value="P5CR-like_CS"/>
</dbReference>
<dbReference type="InterPro" id="IPR029036">
    <property type="entry name" value="P5CR_dimer"/>
</dbReference>
<dbReference type="InterPro" id="IPR000304">
    <property type="entry name" value="Pyrroline-COOH_reductase"/>
</dbReference>
<dbReference type="NCBIfam" id="TIGR00112">
    <property type="entry name" value="proC"/>
    <property type="match status" value="1"/>
</dbReference>
<dbReference type="PANTHER" id="PTHR11645">
    <property type="entry name" value="PYRROLINE-5-CARBOXYLATE REDUCTASE"/>
    <property type="match status" value="1"/>
</dbReference>
<dbReference type="PANTHER" id="PTHR11645:SF61">
    <property type="entry name" value="PYRROLINE-5-CARBOXYLATE REDUCTASE 2"/>
    <property type="match status" value="1"/>
</dbReference>
<dbReference type="Pfam" id="PF03807">
    <property type="entry name" value="F420_oxidored"/>
    <property type="match status" value="1"/>
</dbReference>
<dbReference type="Pfam" id="PF14748">
    <property type="entry name" value="P5CR_dimer"/>
    <property type="match status" value="1"/>
</dbReference>
<dbReference type="PIRSF" id="PIRSF000193">
    <property type="entry name" value="Pyrrol-5-carb_rd"/>
    <property type="match status" value="1"/>
</dbReference>
<dbReference type="SUPFAM" id="SSF48179">
    <property type="entry name" value="6-phosphogluconate dehydrogenase C-terminal domain-like"/>
    <property type="match status" value="1"/>
</dbReference>
<dbReference type="SUPFAM" id="SSF51735">
    <property type="entry name" value="NAD(P)-binding Rossmann-fold domains"/>
    <property type="match status" value="1"/>
</dbReference>
<dbReference type="PROSITE" id="PS00521">
    <property type="entry name" value="P5CR"/>
    <property type="match status" value="1"/>
</dbReference>
<organism>
    <name type="scientific">Macaca fascicularis</name>
    <name type="common">Crab-eating macaque</name>
    <name type="synonym">Cynomolgus monkey</name>
    <dbReference type="NCBI Taxonomy" id="9541"/>
    <lineage>
        <taxon>Eukaryota</taxon>
        <taxon>Metazoa</taxon>
        <taxon>Chordata</taxon>
        <taxon>Craniata</taxon>
        <taxon>Vertebrata</taxon>
        <taxon>Euteleostomi</taxon>
        <taxon>Mammalia</taxon>
        <taxon>Eutheria</taxon>
        <taxon>Euarchontoglires</taxon>
        <taxon>Primates</taxon>
        <taxon>Haplorrhini</taxon>
        <taxon>Catarrhini</taxon>
        <taxon>Cercopithecidae</taxon>
        <taxon>Cercopithecinae</taxon>
        <taxon>Macaca</taxon>
    </lineage>
</organism>
<proteinExistence type="evidence at transcript level"/>
<protein>
    <recommendedName>
        <fullName>Pyrroline-5-carboxylate reductase 2</fullName>
        <shortName>P5C reductase 2</shortName>
        <shortName>P5CR 2</shortName>
        <ecNumber evidence="2">1.5.1.2</ecNumber>
    </recommendedName>
</protein>
<feature type="initiator methionine" description="Removed" evidence="2">
    <location>
        <position position="1"/>
    </location>
</feature>
<feature type="chain" id="PRO_0000270818" description="Pyrroline-5-carboxylate reductase 2">
    <location>
        <begin position="2"/>
        <end position="320"/>
    </location>
</feature>
<feature type="region of interest" description="Disordered" evidence="3">
    <location>
        <begin position="295"/>
        <end position="320"/>
    </location>
</feature>
<feature type="compositionally biased region" description="Low complexity" evidence="3">
    <location>
        <begin position="295"/>
        <end position="305"/>
    </location>
</feature>
<feature type="binding site" evidence="1">
    <location>
        <begin position="6"/>
        <end position="11"/>
    </location>
    <ligand>
        <name>NADP(+)</name>
        <dbReference type="ChEBI" id="CHEBI:58349"/>
    </ligand>
</feature>
<feature type="binding site" evidence="1">
    <location>
        <position position="8"/>
    </location>
    <ligand>
        <name>NADPH</name>
        <dbReference type="ChEBI" id="CHEBI:57783"/>
    </ligand>
</feature>
<feature type="binding site" evidence="1">
    <location>
        <position position="10"/>
    </location>
    <ligand>
        <name>NADPH</name>
        <dbReference type="ChEBI" id="CHEBI:57783"/>
    </ligand>
</feature>
<feature type="binding site" evidence="1">
    <location>
        <position position="11"/>
    </location>
    <ligand>
        <name>NADPH</name>
        <dbReference type="ChEBI" id="CHEBI:57783"/>
    </ligand>
</feature>
<feature type="binding site" evidence="1">
    <location>
        <position position="34"/>
    </location>
    <ligand>
        <name>NADP(+)</name>
        <dbReference type="ChEBI" id="CHEBI:58349"/>
    </ligand>
</feature>
<feature type="binding site" evidence="1">
    <location>
        <position position="34"/>
    </location>
    <ligand>
        <name>NADPH</name>
        <dbReference type="ChEBI" id="CHEBI:57783"/>
    </ligand>
</feature>
<feature type="binding site" evidence="1">
    <location>
        <position position="36"/>
    </location>
    <ligand>
        <name>NADPH</name>
        <dbReference type="ChEBI" id="CHEBI:57783"/>
    </ligand>
</feature>
<feature type="binding site" evidence="1">
    <location>
        <position position="56"/>
    </location>
    <ligand>
        <name>NADP(+)</name>
        <dbReference type="ChEBI" id="CHEBI:58349"/>
    </ligand>
</feature>
<feature type="binding site" evidence="1">
    <location>
        <position position="56"/>
    </location>
    <ligand>
        <name>NADPH</name>
        <dbReference type="ChEBI" id="CHEBI:57783"/>
    </ligand>
</feature>
<feature type="binding site" evidence="1">
    <location>
        <begin position="69"/>
        <end position="72"/>
    </location>
    <ligand>
        <name>NADP(+)</name>
        <dbReference type="ChEBI" id="CHEBI:58349"/>
    </ligand>
</feature>
<feature type="binding site" evidence="1">
    <location>
        <position position="70"/>
    </location>
    <ligand>
        <name>NADPH</name>
        <dbReference type="ChEBI" id="CHEBI:57783"/>
    </ligand>
</feature>
<feature type="binding site" evidence="1">
    <location>
        <position position="71"/>
    </location>
    <ligand>
        <name>NADPH</name>
        <dbReference type="ChEBI" id="CHEBI:57783"/>
    </ligand>
</feature>
<feature type="binding site" evidence="1">
    <location>
        <begin position="95"/>
        <end position="97"/>
    </location>
    <ligand>
        <name>NADP(+)</name>
        <dbReference type="ChEBI" id="CHEBI:58349"/>
    </ligand>
</feature>
<feature type="binding site" evidence="1">
    <location>
        <position position="97"/>
    </location>
    <ligand>
        <name>NADPH</name>
        <dbReference type="ChEBI" id="CHEBI:57783"/>
    </ligand>
</feature>
<feature type="binding site" evidence="1">
    <location>
        <position position="164"/>
    </location>
    <ligand>
        <name>L-proline</name>
        <dbReference type="ChEBI" id="CHEBI:60039"/>
    </ligand>
</feature>
<feature type="binding site" evidence="1">
    <location>
        <position position="230"/>
    </location>
    <ligand>
        <name>NADPH</name>
        <dbReference type="ChEBI" id="CHEBI:57783"/>
    </ligand>
</feature>
<feature type="binding site" evidence="1">
    <location>
        <position position="237"/>
    </location>
    <ligand>
        <name>L-proline</name>
        <dbReference type="ChEBI" id="CHEBI:60039"/>
    </ligand>
</feature>
<feature type="binding site" evidence="1">
    <location>
        <position position="238"/>
    </location>
    <ligand>
        <name>L-proline</name>
        <dbReference type="ChEBI" id="CHEBI:60039"/>
    </ligand>
</feature>
<feature type="modified residue" description="N-acetylserine" evidence="2">
    <location>
        <position position="2"/>
    </location>
</feature>
<feature type="modified residue" description="Phosphoserine" evidence="2">
    <location>
        <position position="304"/>
    </location>
</feature>
<name>P5CR2_MACFA</name>
<keyword id="KW-0007">Acetylation</keyword>
<keyword id="KW-0028">Amino-acid biosynthesis</keyword>
<keyword id="KW-0963">Cytoplasm</keyword>
<keyword id="KW-0496">Mitochondrion</keyword>
<keyword id="KW-0521">NADP</keyword>
<keyword id="KW-0560">Oxidoreductase</keyword>
<keyword id="KW-0597">Phosphoprotein</keyword>
<keyword id="KW-0641">Proline biosynthesis</keyword>
<keyword id="KW-1185">Reference proteome</keyword>
<comment type="function">
    <text evidence="2">Oxidoreductase that catalyzes the last step in proline biosynthesis, which corresponds to the reduction of pyrroline-5-carboxylate to L-proline using NAD(P)H. At physiologic concentrations, has higher specific activity in the presence of NADH. Involved in cellular response to oxidative stress. In some cell types, such as erythrocytes, its primary function may be the generation of NADP(+).</text>
</comment>
<comment type="catalytic activity">
    <reaction evidence="2">
        <text>L-proline + NADP(+) = (S)-1-pyrroline-5-carboxylate + NADPH + 2 H(+)</text>
        <dbReference type="Rhea" id="RHEA:14109"/>
        <dbReference type="ChEBI" id="CHEBI:15378"/>
        <dbReference type="ChEBI" id="CHEBI:17388"/>
        <dbReference type="ChEBI" id="CHEBI:57783"/>
        <dbReference type="ChEBI" id="CHEBI:58349"/>
        <dbReference type="ChEBI" id="CHEBI:60039"/>
        <dbReference type="EC" id="1.5.1.2"/>
    </reaction>
    <physiologicalReaction direction="right-to-left" evidence="2">
        <dbReference type="Rhea" id="RHEA:14111"/>
    </physiologicalReaction>
</comment>
<comment type="catalytic activity">
    <reaction evidence="2">
        <text>L-proline + NAD(+) = (S)-1-pyrroline-5-carboxylate + NADH + 2 H(+)</text>
        <dbReference type="Rhea" id="RHEA:14105"/>
        <dbReference type="ChEBI" id="CHEBI:15378"/>
        <dbReference type="ChEBI" id="CHEBI:17388"/>
        <dbReference type="ChEBI" id="CHEBI:57540"/>
        <dbReference type="ChEBI" id="CHEBI:57945"/>
        <dbReference type="ChEBI" id="CHEBI:60039"/>
        <dbReference type="EC" id="1.5.1.2"/>
    </reaction>
    <physiologicalReaction direction="right-to-left" evidence="2">
        <dbReference type="Rhea" id="RHEA:14107"/>
    </physiologicalReaction>
</comment>
<comment type="pathway">
    <text>Amino-acid biosynthesis; L-proline biosynthesis; L-proline from L-glutamate 5-semialdehyde: step 1/1.</text>
</comment>
<comment type="subunit">
    <text evidence="2">Homodecamer; composed of 5 homodimers. Interacts with LTO1.</text>
</comment>
<comment type="subcellular location">
    <subcellularLocation>
        <location evidence="2">Cytoplasm</location>
    </subcellularLocation>
    <subcellularLocation>
        <location evidence="2">Mitochondrion</location>
    </subcellularLocation>
</comment>
<comment type="similarity">
    <text evidence="4">Belongs to the pyrroline-5-carboxylate reductase family.</text>
</comment>
<reference key="1">
    <citation type="submission" date="2005-06" db="EMBL/GenBank/DDBJ databases">
        <title>DNA sequences of macaque genes expressed in brain or testis and its evolutionary implications.</title>
        <authorList>
            <consortium name="International consortium for macaque cDNA sequencing and analysis"/>
        </authorList>
    </citation>
    <scope>NUCLEOTIDE SEQUENCE [LARGE SCALE MRNA]</scope>
    <source>
        <tissue>Testis</tissue>
    </source>
</reference>
<accession>Q4R6W7</accession>
<gene>
    <name type="primary">PYCR2</name>
    <name type="ORF">QtsA-16987</name>
</gene>
<sequence length="320" mass="33661">MSVGIIGAGQLAYALARGFTAAGIVSAHKIIASSPEMNLPTVSALRKMGVNLTRSNKETVKHSDVLFLAVKPHIIPFILDEIGADVQARHIVVSCAAGVTISSVEKKLMAFQPAPKVIRCMTNTPVVVREGATVYAMGTHALVEDGQLLEQLMSSVGFCTEVEEDLIDAVTGLSGSGPAYAFMALDALADGGVKMGLPRRLAVRLGAQALLGAAKMLLDSEQHPCQLKDNVCSPGGATIHALHFLESGGFRSLLINAVEASCIRTRELQSMADQEKISPAALKKTLLDRVKLESPTVSTLTPSSPGKLLTRSLALGGKKD</sequence>
<evidence type="ECO:0000250" key="1">
    <source>
        <dbReference type="UniProtKB" id="P32322"/>
    </source>
</evidence>
<evidence type="ECO:0000250" key="2">
    <source>
        <dbReference type="UniProtKB" id="Q96C36"/>
    </source>
</evidence>
<evidence type="ECO:0000256" key="3">
    <source>
        <dbReference type="SAM" id="MobiDB-lite"/>
    </source>
</evidence>
<evidence type="ECO:0000305" key="4"/>